<keyword id="KW-0143">Chaperone</keyword>
<keyword id="KW-0963">Cytoplasm</keyword>
<keyword id="KW-0653">Protein transport</keyword>
<keyword id="KW-1185">Reference proteome</keyword>
<keyword id="KW-0811">Translocation</keyword>
<keyword id="KW-0813">Transport</keyword>
<comment type="function">
    <text evidence="1">One of the proteins required for the normal export of preproteins out of the cell cytoplasm. It is a molecular chaperone that binds to a subset of precursor proteins, maintaining them in a translocation-competent state. It also specifically binds to its receptor SecA.</text>
</comment>
<comment type="subunit">
    <text evidence="1">Homotetramer, a dimer of dimers. One homotetramer interacts with 1 SecA dimer.</text>
</comment>
<comment type="subcellular location">
    <subcellularLocation>
        <location evidence="1">Cytoplasm</location>
    </subcellularLocation>
</comment>
<comment type="similarity">
    <text evidence="1">Belongs to the SecB family.</text>
</comment>
<protein>
    <recommendedName>
        <fullName evidence="1">Protein-export protein SecB</fullName>
    </recommendedName>
</protein>
<name>SECB_SHEB5</name>
<evidence type="ECO:0000255" key="1">
    <source>
        <dbReference type="HAMAP-Rule" id="MF_00821"/>
    </source>
</evidence>
<gene>
    <name evidence="1" type="primary">secB</name>
    <name type="ordered locus">Sbal_4330</name>
</gene>
<organism>
    <name type="scientific">Shewanella baltica (strain OS155 / ATCC BAA-1091)</name>
    <dbReference type="NCBI Taxonomy" id="325240"/>
    <lineage>
        <taxon>Bacteria</taxon>
        <taxon>Pseudomonadati</taxon>
        <taxon>Pseudomonadota</taxon>
        <taxon>Gammaproteobacteria</taxon>
        <taxon>Alteromonadales</taxon>
        <taxon>Shewanellaceae</taxon>
        <taxon>Shewanella</taxon>
    </lineage>
</organism>
<proteinExistence type="inferred from homology"/>
<sequence>MAEVANNEQQAPQFNIQRVYTKDVSFETPNSPAVFQKEWNPEVKLDLDTRSAKLADDVYEVVLSLTVTAQNGGDTAFLCEVQQAGIFSITGLTEPQLAHSLGAYCPNFLFPYARETVGSLVGRGTFPQLNLAPVNFDALFAQYVQQRQAAATAPAAEEANA</sequence>
<feature type="chain" id="PRO_1000062517" description="Protein-export protein SecB">
    <location>
        <begin position="1"/>
        <end position="161"/>
    </location>
</feature>
<reference key="1">
    <citation type="submission" date="2007-02" db="EMBL/GenBank/DDBJ databases">
        <title>Complete sequence of chromosome of Shewanella baltica OS155.</title>
        <authorList>
            <consortium name="US DOE Joint Genome Institute"/>
            <person name="Copeland A."/>
            <person name="Lucas S."/>
            <person name="Lapidus A."/>
            <person name="Barry K."/>
            <person name="Detter J.C."/>
            <person name="Glavina del Rio T."/>
            <person name="Hammon N."/>
            <person name="Israni S."/>
            <person name="Dalin E."/>
            <person name="Tice H."/>
            <person name="Pitluck S."/>
            <person name="Sims D.R."/>
            <person name="Brettin T."/>
            <person name="Bruce D."/>
            <person name="Han C."/>
            <person name="Tapia R."/>
            <person name="Brainard J."/>
            <person name="Schmutz J."/>
            <person name="Larimer F."/>
            <person name="Land M."/>
            <person name="Hauser L."/>
            <person name="Kyrpides N."/>
            <person name="Mikhailova N."/>
            <person name="Brettar I."/>
            <person name="Klappenbach J."/>
            <person name="Konstantinidis K."/>
            <person name="Rodrigues J."/>
            <person name="Tiedje J."/>
            <person name="Richardson P."/>
        </authorList>
    </citation>
    <scope>NUCLEOTIDE SEQUENCE [LARGE SCALE GENOMIC DNA]</scope>
    <source>
        <strain>OS155 / ATCC BAA-1091</strain>
    </source>
</reference>
<dbReference type="EMBL" id="CP000563">
    <property type="protein sequence ID" value="ABN63791.1"/>
    <property type="molecule type" value="Genomic_DNA"/>
</dbReference>
<dbReference type="RefSeq" id="WP_011848269.1">
    <property type="nucleotide sequence ID" value="NC_009052.1"/>
</dbReference>
<dbReference type="SMR" id="A3DAM8"/>
<dbReference type="STRING" id="325240.Sbal_4330"/>
<dbReference type="KEGG" id="sbl:Sbal_4330"/>
<dbReference type="HOGENOM" id="CLU_111574_1_0_6"/>
<dbReference type="OrthoDB" id="9795145at2"/>
<dbReference type="Proteomes" id="UP000001557">
    <property type="component" value="Chromosome"/>
</dbReference>
<dbReference type="GO" id="GO:0005737">
    <property type="term" value="C:cytoplasm"/>
    <property type="evidence" value="ECO:0007669"/>
    <property type="project" value="UniProtKB-SubCell"/>
</dbReference>
<dbReference type="GO" id="GO:0051082">
    <property type="term" value="F:unfolded protein binding"/>
    <property type="evidence" value="ECO:0007669"/>
    <property type="project" value="InterPro"/>
</dbReference>
<dbReference type="GO" id="GO:0006457">
    <property type="term" value="P:protein folding"/>
    <property type="evidence" value="ECO:0007669"/>
    <property type="project" value="UniProtKB-UniRule"/>
</dbReference>
<dbReference type="GO" id="GO:0051262">
    <property type="term" value="P:protein tetramerization"/>
    <property type="evidence" value="ECO:0007669"/>
    <property type="project" value="InterPro"/>
</dbReference>
<dbReference type="GO" id="GO:0015031">
    <property type="term" value="P:protein transport"/>
    <property type="evidence" value="ECO:0007669"/>
    <property type="project" value="UniProtKB-UniRule"/>
</dbReference>
<dbReference type="Gene3D" id="3.10.420.10">
    <property type="entry name" value="SecB-like"/>
    <property type="match status" value="1"/>
</dbReference>
<dbReference type="HAMAP" id="MF_00821">
    <property type="entry name" value="SecB"/>
    <property type="match status" value="1"/>
</dbReference>
<dbReference type="InterPro" id="IPR003708">
    <property type="entry name" value="SecB"/>
</dbReference>
<dbReference type="InterPro" id="IPR035958">
    <property type="entry name" value="SecB-like_sf"/>
</dbReference>
<dbReference type="NCBIfam" id="NF004393">
    <property type="entry name" value="PRK05751.1-4"/>
    <property type="match status" value="1"/>
</dbReference>
<dbReference type="NCBIfam" id="TIGR00809">
    <property type="entry name" value="secB"/>
    <property type="match status" value="1"/>
</dbReference>
<dbReference type="PANTHER" id="PTHR36918">
    <property type="match status" value="1"/>
</dbReference>
<dbReference type="PANTHER" id="PTHR36918:SF1">
    <property type="entry name" value="PROTEIN-EXPORT PROTEIN SECB"/>
    <property type="match status" value="1"/>
</dbReference>
<dbReference type="Pfam" id="PF02556">
    <property type="entry name" value="SecB"/>
    <property type="match status" value="1"/>
</dbReference>
<dbReference type="PRINTS" id="PR01594">
    <property type="entry name" value="SECBCHAPRONE"/>
</dbReference>
<dbReference type="SUPFAM" id="SSF54611">
    <property type="entry name" value="SecB-like"/>
    <property type="match status" value="1"/>
</dbReference>
<accession>A3DAM8</accession>